<comment type="function">
    <text evidence="2 3 5">Catalyzes the formation of 3 thioether bonds during production of the sactipeptide subtilosin from SboA. In vitro the thioether bonds cannot be made in the absence of the SboA propeptide, suggesting this is the first reaction in subtilosin maturation (PubMed:22366720). In vitro, in the absence of a second substrate, cleaves S-adenosyl-L-methionine into Met and 5'-dA (PubMed:22366720).</text>
</comment>
<comment type="cofactor">
    <cofactor evidence="5">
        <name>[4Fe-4S] cluster</name>
        <dbReference type="ChEBI" id="CHEBI:49883"/>
    </cofactor>
    <text evidence="5">Binds 2 [4Fe-4S] clusters. One cluster is coordinated with 3 cysteines and an exchangeable S-adenosyl-L-methionine, the other is coordinated via 3 cysteines and maybe direct contact with the SboA precursor.</text>
</comment>
<comment type="subcellular location">
    <subcellularLocation>
        <location evidence="6">Cytoplasm</location>
    </subcellularLocation>
</comment>
<comment type="induction">
    <text evidence="4">Transcription is highly induced by oxygen limitation and is under dual and independent control of Spo0A-AbrB and ResDE.</text>
</comment>
<keyword id="KW-0004">4Fe-4S</keyword>
<keyword id="KW-0045">Antibiotic biosynthesis</keyword>
<keyword id="KW-0871">Bacteriocin biosynthesis</keyword>
<keyword id="KW-0963">Cytoplasm</keyword>
<keyword id="KW-0408">Iron</keyword>
<keyword id="KW-0411">Iron-sulfur</keyword>
<keyword id="KW-0479">Metal-binding</keyword>
<keyword id="KW-0560">Oxidoreductase</keyword>
<keyword id="KW-1185">Reference proteome</keyword>
<keyword id="KW-0949">S-adenosyl-L-methionine</keyword>
<accession>P71011</accession>
<accession>Q8RKH6</accession>
<gene>
    <name type="primary">albA</name>
    <name type="synonym">ywiA</name>
    <name type="ordered locus">BSU37370</name>
</gene>
<evidence type="ECO:0000255" key="1">
    <source>
        <dbReference type="PROSITE-ProRule" id="PRU01266"/>
    </source>
</evidence>
<evidence type="ECO:0000269" key="2">
    <source>
    </source>
</evidence>
<evidence type="ECO:0000269" key="3">
    <source>
    </source>
</evidence>
<evidence type="ECO:0000269" key="4">
    <source>
    </source>
</evidence>
<evidence type="ECO:0000269" key="5">
    <source>
    </source>
</evidence>
<evidence type="ECO:0000305" key="6">
    <source>
    </source>
</evidence>
<sequence length="448" mass="51514">MFIEQMFPFINESVRVHQLPEGGVLEIDYLRDNVSISDFEYLDLNKTAYELCMRMDGQKTAEQILAEQCAVYDESPEDHKDWYYDMLNMLQNKQVIQLGNRASRHTITTSGSNEFPMPLHATFELTHRCNLKCAHCYLESSPEALGTVSIEQFKKTADMLFDNGVLTCEITGGEIFVHPNANEILDYVCKKFKKVAVLTNGTLMRKESLELLKTYKQKIIVGISLDSVNSEVHDSFRGRKGSFAQTCKTIKLLSDHGIFVRVAMSVFEKNMWEIHDMAQKVRDLGAKAFSYNWVDDFGRGRDIVHPTKDAEQHRKFMEYEQHVIDEFKDLIPIIPYERKRAANCGAGWKSIVISPFGEVRPCALFPKEFSLGNIFHDSYESIFNSPLVHKLWQAQAPRFSEHCMKDKCPFSGYCGGCYLKGLNSNKYHRKNICSWAKNEQLEDVVQLI</sequence>
<name>ALBA_BACSU</name>
<feature type="chain" id="PRO_0000064542" description="Antilisterial bacteriocin subtilosin biosynthesis protein AlbA">
    <location>
        <begin position="1"/>
        <end position="448"/>
    </location>
</feature>
<feature type="domain" description="Radical SAM core" evidence="1">
    <location>
        <begin position="115"/>
        <end position="329"/>
    </location>
</feature>
<feature type="binding site" evidence="5">
    <location>
        <position position="129"/>
    </location>
    <ligand>
        <name>[4Fe-4S] cluster</name>
        <dbReference type="ChEBI" id="CHEBI:49883"/>
        <label>1</label>
        <note>4Fe-4S-S-AdoMet</note>
    </ligand>
</feature>
<feature type="binding site" evidence="5">
    <location>
        <position position="133"/>
    </location>
    <ligand>
        <name>[4Fe-4S] cluster</name>
        <dbReference type="ChEBI" id="CHEBI:49883"/>
        <label>1</label>
        <note>4Fe-4S-S-AdoMet</note>
    </ligand>
</feature>
<feature type="binding site" evidence="5">
    <location>
        <position position="136"/>
    </location>
    <ligand>
        <name>[4Fe-4S] cluster</name>
        <dbReference type="ChEBI" id="CHEBI:49883"/>
        <label>1</label>
        <note>4Fe-4S-S-AdoMet</note>
    </ligand>
</feature>
<feature type="binding site" evidence="5">
    <location>
        <position position="408"/>
    </location>
    <ligand>
        <name>[4Fe-4S] cluster</name>
        <dbReference type="ChEBI" id="CHEBI:49883"/>
        <label>2</label>
        <note>4Fe-4S-S-substrate</note>
    </ligand>
</feature>
<feature type="binding site" evidence="5">
    <location>
        <position position="414"/>
    </location>
    <ligand>
        <name>[4Fe-4S] cluster</name>
        <dbReference type="ChEBI" id="CHEBI:49883"/>
        <label>2</label>
        <note>4Fe-4S-S-substrate</note>
    </ligand>
</feature>
<feature type="binding site" evidence="5">
    <location>
        <position position="417"/>
    </location>
    <ligand>
        <name>[4Fe-4S] cluster</name>
        <dbReference type="ChEBI" id="CHEBI:49883"/>
        <label>2</label>
        <note>4Fe-4S-S-substrate</note>
    </ligand>
</feature>
<feature type="sequence variant" description="In strain: ATCC 6633.">
    <original>Q</original>
    <variation>L</variation>
    <location>
        <position position="91"/>
    </location>
</feature>
<feature type="sequence variant" description="In strain: ATCC 6633.">
    <original>I</original>
    <variation>V</variation>
    <location>
        <position position="96"/>
    </location>
</feature>
<feature type="sequence variant" description="In strain: ATCC 6633.">
    <original>GNRASRHTIT</original>
    <variation>ENQSTRHAIN</variation>
    <location>
        <begin position="99"/>
        <end position="108"/>
    </location>
</feature>
<feature type="sequence variant" description="In strain: ATCC 6633.">
    <original>T</original>
    <variation>A</variation>
    <location>
        <position position="214"/>
    </location>
</feature>
<feature type="sequence variant" description="In strain: ATCC 6633.">
    <original>V</original>
    <variation>I</variation>
    <location>
        <position position="232"/>
    </location>
</feature>
<feature type="sequence variant" description="In strain: ATCC 6633.">
    <original>D</original>
    <variation>N</variation>
    <location>
        <position position="309"/>
    </location>
</feature>
<feature type="sequence variant" description="In strain: ATCC 6633.">
    <original>HV</original>
    <variation>NI</variation>
    <location>
        <begin position="322"/>
        <end position="323"/>
    </location>
</feature>
<feature type="sequence variant" description="In strain: ATCC 6633.">
    <original>G</original>
    <variation>S</variation>
    <location>
        <position position="412"/>
    </location>
</feature>
<feature type="mutagenesis site" description="No longer cleaves SAM, does not make thioether bonds, contains 68% iron of wild-type." evidence="5">
    <original>CNLKCAHC</original>
    <variation>ANLKAAHA</variation>
    <location>
        <begin position="129"/>
        <end position="136"/>
    </location>
</feature>
<feature type="mutagenesis site" description="Weakly cleaves SAM but does not make thioether bonds, contains 68% iron of wild-type." evidence="5">
    <original>CPFSGYCGGC</original>
    <variation>APFSGYAGGA</variation>
    <location>
        <begin position="408"/>
        <end position="417"/>
    </location>
</feature>
<proteinExistence type="evidence at protein level"/>
<reference key="1">
    <citation type="submission" date="2002-02" db="EMBL/GenBank/DDBJ databases">
        <title>Subtilosin A biosynthesis is conserved among two different classes of Bacillus subtilis strains.</title>
        <authorList>
            <person name="Stein T."/>
            <person name="Duesterhus S."/>
            <person name="Entian K.-D."/>
        </authorList>
    </citation>
    <scope>NUCLEOTIDE SEQUENCE [GENOMIC DNA]</scope>
    <source>
        <strain>ATCC 6633 / PCI 219 / NRS 231</strain>
    </source>
</reference>
<reference key="2">
    <citation type="journal article" date="1997" name="Microbiology">
        <title>The Bacillus subtilis genome from gerBC (311 degrees) to licR (334 degrees).</title>
        <authorList>
            <person name="Presecan E."/>
            <person name="Moszer I."/>
            <person name="Boursier L."/>
            <person name="Cruz Ramos H."/>
            <person name="De La Fuente V."/>
            <person name="Hullo M.-F."/>
            <person name="Lelong C."/>
            <person name="Schleich S."/>
            <person name="Sekowska A."/>
            <person name="Song B.H."/>
            <person name="Villani G."/>
            <person name="Kunst F."/>
            <person name="Danchin A."/>
            <person name="Glaser P."/>
        </authorList>
    </citation>
    <scope>NUCLEOTIDE SEQUENCE [GENOMIC DNA]</scope>
    <source>
        <strain>168</strain>
    </source>
</reference>
<reference key="3">
    <citation type="journal article" date="1997" name="Nature">
        <title>The complete genome sequence of the Gram-positive bacterium Bacillus subtilis.</title>
        <authorList>
            <person name="Kunst F."/>
            <person name="Ogasawara N."/>
            <person name="Moszer I."/>
            <person name="Albertini A.M."/>
            <person name="Alloni G."/>
            <person name="Azevedo V."/>
            <person name="Bertero M.G."/>
            <person name="Bessieres P."/>
            <person name="Bolotin A."/>
            <person name="Borchert S."/>
            <person name="Borriss R."/>
            <person name="Boursier L."/>
            <person name="Brans A."/>
            <person name="Braun M."/>
            <person name="Brignell S.C."/>
            <person name="Bron S."/>
            <person name="Brouillet S."/>
            <person name="Bruschi C.V."/>
            <person name="Caldwell B."/>
            <person name="Capuano V."/>
            <person name="Carter N.M."/>
            <person name="Choi S.-K."/>
            <person name="Codani J.-J."/>
            <person name="Connerton I.F."/>
            <person name="Cummings N.J."/>
            <person name="Daniel R.A."/>
            <person name="Denizot F."/>
            <person name="Devine K.M."/>
            <person name="Duesterhoeft A."/>
            <person name="Ehrlich S.D."/>
            <person name="Emmerson P.T."/>
            <person name="Entian K.-D."/>
            <person name="Errington J."/>
            <person name="Fabret C."/>
            <person name="Ferrari E."/>
            <person name="Foulger D."/>
            <person name="Fritz C."/>
            <person name="Fujita M."/>
            <person name="Fujita Y."/>
            <person name="Fuma S."/>
            <person name="Galizzi A."/>
            <person name="Galleron N."/>
            <person name="Ghim S.-Y."/>
            <person name="Glaser P."/>
            <person name="Goffeau A."/>
            <person name="Golightly E.J."/>
            <person name="Grandi G."/>
            <person name="Guiseppi G."/>
            <person name="Guy B.J."/>
            <person name="Haga K."/>
            <person name="Haiech J."/>
            <person name="Harwood C.R."/>
            <person name="Henaut A."/>
            <person name="Hilbert H."/>
            <person name="Holsappel S."/>
            <person name="Hosono S."/>
            <person name="Hullo M.-F."/>
            <person name="Itaya M."/>
            <person name="Jones L.-M."/>
            <person name="Joris B."/>
            <person name="Karamata D."/>
            <person name="Kasahara Y."/>
            <person name="Klaerr-Blanchard M."/>
            <person name="Klein C."/>
            <person name="Kobayashi Y."/>
            <person name="Koetter P."/>
            <person name="Koningstein G."/>
            <person name="Krogh S."/>
            <person name="Kumano M."/>
            <person name="Kurita K."/>
            <person name="Lapidus A."/>
            <person name="Lardinois S."/>
            <person name="Lauber J."/>
            <person name="Lazarevic V."/>
            <person name="Lee S.-M."/>
            <person name="Levine A."/>
            <person name="Liu H."/>
            <person name="Masuda S."/>
            <person name="Mauel C."/>
            <person name="Medigue C."/>
            <person name="Medina N."/>
            <person name="Mellado R.P."/>
            <person name="Mizuno M."/>
            <person name="Moestl D."/>
            <person name="Nakai S."/>
            <person name="Noback M."/>
            <person name="Noone D."/>
            <person name="O'Reilly M."/>
            <person name="Ogawa K."/>
            <person name="Ogiwara A."/>
            <person name="Oudega B."/>
            <person name="Park S.-H."/>
            <person name="Parro V."/>
            <person name="Pohl T.M."/>
            <person name="Portetelle D."/>
            <person name="Porwollik S."/>
            <person name="Prescott A.M."/>
            <person name="Presecan E."/>
            <person name="Pujic P."/>
            <person name="Purnelle B."/>
            <person name="Rapoport G."/>
            <person name="Rey M."/>
            <person name="Reynolds S."/>
            <person name="Rieger M."/>
            <person name="Rivolta C."/>
            <person name="Rocha E."/>
            <person name="Roche B."/>
            <person name="Rose M."/>
            <person name="Sadaie Y."/>
            <person name="Sato T."/>
            <person name="Scanlan E."/>
            <person name="Schleich S."/>
            <person name="Schroeter R."/>
            <person name="Scoffone F."/>
            <person name="Sekiguchi J."/>
            <person name="Sekowska A."/>
            <person name="Seror S.J."/>
            <person name="Serror P."/>
            <person name="Shin B.-S."/>
            <person name="Soldo B."/>
            <person name="Sorokin A."/>
            <person name="Tacconi E."/>
            <person name="Takagi T."/>
            <person name="Takahashi H."/>
            <person name="Takemaru K."/>
            <person name="Takeuchi M."/>
            <person name="Tamakoshi A."/>
            <person name="Tanaka T."/>
            <person name="Terpstra P."/>
            <person name="Tognoni A."/>
            <person name="Tosato V."/>
            <person name="Uchiyama S."/>
            <person name="Vandenbol M."/>
            <person name="Vannier F."/>
            <person name="Vassarotti A."/>
            <person name="Viari A."/>
            <person name="Wambutt R."/>
            <person name="Wedler E."/>
            <person name="Wedler H."/>
            <person name="Weitzenegger T."/>
            <person name="Winters P."/>
            <person name="Wipat A."/>
            <person name="Yamamoto H."/>
            <person name="Yamane K."/>
            <person name="Yasumoto K."/>
            <person name="Yata K."/>
            <person name="Yoshida K."/>
            <person name="Yoshikawa H.-F."/>
            <person name="Zumstein E."/>
            <person name="Yoshikawa H."/>
            <person name="Danchin A."/>
        </authorList>
    </citation>
    <scope>NUCLEOTIDE SEQUENCE [LARGE SCALE GENOMIC DNA]</scope>
    <source>
        <strain>168</strain>
    </source>
</reference>
<reference key="4">
    <citation type="journal article" date="1999" name="J. Bacteriol.">
        <title>Genes of the sbo-alb locus of Bacillus subtilis are required for production of the antilisterial bacteriocin subtilosin.</title>
        <authorList>
            <person name="Zheng G."/>
            <person name="Yan L.Z."/>
            <person name="Vederas J.C."/>
            <person name="Zuber P."/>
        </authorList>
    </citation>
    <scope>FUNCTION</scope>
    <source>
        <strain>168 / JH642</strain>
        <strain>22a</strain>
    </source>
</reference>
<reference key="5">
    <citation type="journal article" date="2000" name="J. Bacteriol.">
        <title>Mutational analysis of the sbo-alb locus of Bacillus subtilis: identification of genes required for subtilosin production and immunity.</title>
        <authorList>
            <person name="Zheng G."/>
            <person name="Hehn R."/>
            <person name="Zuber P."/>
        </authorList>
    </citation>
    <scope>FUNCTION</scope>
    <source>
        <strain>168 / JH642</strain>
    </source>
</reference>
<reference key="6">
    <citation type="journal article" date="2000" name="J. Bacteriol.">
        <title>Dual control of sbo-alb operon expression by the Spo0 and ResDE systems of signal transduction under anaerobic conditions in Bacillus subtilis.</title>
        <authorList>
            <person name="Nakano M.M."/>
            <person name="Zheng G."/>
            <person name="Zuber P."/>
        </authorList>
    </citation>
    <scope>TRANSCRIPTIONAL REGULATION</scope>
    <source>
        <strain>168 / JH642</strain>
    </source>
</reference>
<reference key="7">
    <citation type="journal article" date="2012" name="Nat. Chem. Biol.">
        <title>The radical SAM enzyme AlbA catalyzes thioether bond formation in subtilosin A.</title>
        <authorList>
            <person name="Fluehe L."/>
            <person name="Knappe T.A."/>
            <person name="Gattner M.J."/>
            <person name="Schaefer A."/>
            <person name="Burghaus O."/>
            <person name="Linne U."/>
            <person name="Marahiel M.A."/>
        </authorList>
    </citation>
    <scope>FUNCTION</scope>
    <scope>SUBSTRATE SPECIFICITY</scope>
    <scope>POSSIBLE REACTION MECHANISM</scope>
    <scope>COFACTOR</scope>
    <scope>SUBCELLULAR LOCATION</scope>
    <scope>MUTAGENESIS OF 129-CYS--CYS-136 AND 408-CYS--CYS-417</scope>
    <source>
        <strain>168</strain>
    </source>
</reference>
<protein>
    <recommendedName>
        <fullName>Antilisterial bacteriocin subtilosin biosynthesis protein AlbA</fullName>
        <ecNumber evidence="6">1.21.98.-</ecNumber>
    </recommendedName>
</protein>
<organism>
    <name type="scientific">Bacillus subtilis (strain 168)</name>
    <dbReference type="NCBI Taxonomy" id="224308"/>
    <lineage>
        <taxon>Bacteria</taxon>
        <taxon>Bacillati</taxon>
        <taxon>Bacillota</taxon>
        <taxon>Bacilli</taxon>
        <taxon>Bacillales</taxon>
        <taxon>Bacillaceae</taxon>
        <taxon>Bacillus</taxon>
    </lineage>
</organism>
<dbReference type="EC" id="1.21.98.-" evidence="6"/>
<dbReference type="EMBL" id="AJ430547">
    <property type="protein sequence ID" value="CAD23199.1"/>
    <property type="molecule type" value="Genomic_DNA"/>
</dbReference>
<dbReference type="EMBL" id="Z80360">
    <property type="protein sequence ID" value="CAB02509.1"/>
    <property type="molecule type" value="Genomic_DNA"/>
</dbReference>
<dbReference type="EMBL" id="Z97024">
    <property type="protein sequence ID" value="CAB09700.1"/>
    <property type="molecule type" value="Genomic_DNA"/>
</dbReference>
<dbReference type="EMBL" id="AL009126">
    <property type="protein sequence ID" value="CAB15764.1"/>
    <property type="molecule type" value="Genomic_DNA"/>
</dbReference>
<dbReference type="PIR" id="B70059">
    <property type="entry name" value="B70059"/>
</dbReference>
<dbReference type="RefSeq" id="NP_391617.1">
    <property type="nucleotide sequence ID" value="NC_000964.3"/>
</dbReference>
<dbReference type="RefSeq" id="WP_003242599.1">
    <property type="nucleotide sequence ID" value="NZ_OZ025638.1"/>
</dbReference>
<dbReference type="SMR" id="P71011"/>
<dbReference type="FunCoup" id="P71011">
    <property type="interactions" value="42"/>
</dbReference>
<dbReference type="STRING" id="224308.BSU37370"/>
<dbReference type="jPOST" id="P71011"/>
<dbReference type="PaxDb" id="224308-BSU37370"/>
<dbReference type="EnsemblBacteria" id="CAB15764">
    <property type="protein sequence ID" value="CAB15764"/>
    <property type="gene ID" value="BSU_37370"/>
</dbReference>
<dbReference type="GeneID" id="937059"/>
<dbReference type="KEGG" id="bsu:BSU37370"/>
<dbReference type="PATRIC" id="fig|224308.179.peg.4047"/>
<dbReference type="eggNOG" id="COG0535">
    <property type="taxonomic scope" value="Bacteria"/>
</dbReference>
<dbReference type="InParanoid" id="P71011"/>
<dbReference type="OrthoDB" id="9782387at2"/>
<dbReference type="PhylomeDB" id="P71011"/>
<dbReference type="BioCyc" id="BSUB:BSU37370-MONOMER"/>
<dbReference type="Proteomes" id="UP000001570">
    <property type="component" value="Chromosome"/>
</dbReference>
<dbReference type="GO" id="GO:0005737">
    <property type="term" value="C:cytoplasm"/>
    <property type="evidence" value="ECO:0007669"/>
    <property type="project" value="UniProtKB-SubCell"/>
</dbReference>
<dbReference type="GO" id="GO:0051539">
    <property type="term" value="F:4 iron, 4 sulfur cluster binding"/>
    <property type="evidence" value="ECO:0007669"/>
    <property type="project" value="UniProtKB-KW"/>
</dbReference>
<dbReference type="GO" id="GO:0046872">
    <property type="term" value="F:metal ion binding"/>
    <property type="evidence" value="ECO:0007669"/>
    <property type="project" value="UniProtKB-KW"/>
</dbReference>
<dbReference type="GO" id="GO:0016491">
    <property type="term" value="F:oxidoreductase activity"/>
    <property type="evidence" value="ECO:0007669"/>
    <property type="project" value="UniProtKB-KW"/>
</dbReference>
<dbReference type="GO" id="GO:0030152">
    <property type="term" value="P:bacteriocin biosynthetic process"/>
    <property type="evidence" value="ECO:0007669"/>
    <property type="project" value="UniProtKB-KW"/>
</dbReference>
<dbReference type="CDD" id="cd01335">
    <property type="entry name" value="Radical_SAM"/>
    <property type="match status" value="1"/>
</dbReference>
<dbReference type="CDD" id="cd21125">
    <property type="entry name" value="SPASM_AlbA-like"/>
    <property type="match status" value="1"/>
</dbReference>
<dbReference type="Gene3D" id="3.20.20.70">
    <property type="entry name" value="Aldolase class I"/>
    <property type="match status" value="1"/>
</dbReference>
<dbReference type="Gene3D" id="1.10.10.1150">
    <property type="entry name" value="Coenzyme PQQ synthesis protein D (PqqD)"/>
    <property type="match status" value="1"/>
</dbReference>
<dbReference type="InterPro" id="IPR023885">
    <property type="entry name" value="4Fe4S-binding_SPASM_dom"/>
</dbReference>
<dbReference type="InterPro" id="IPR013785">
    <property type="entry name" value="Aldolase_TIM"/>
</dbReference>
<dbReference type="InterPro" id="IPR006638">
    <property type="entry name" value="Elp3/MiaA/NifB-like_rSAM"/>
</dbReference>
<dbReference type="InterPro" id="IPR008792">
    <property type="entry name" value="PQQD"/>
</dbReference>
<dbReference type="InterPro" id="IPR041881">
    <property type="entry name" value="PqqD_sf"/>
</dbReference>
<dbReference type="InterPro" id="IPR050377">
    <property type="entry name" value="Radical_SAM_PqqE_MftC-like"/>
</dbReference>
<dbReference type="InterPro" id="IPR007197">
    <property type="entry name" value="rSAM"/>
</dbReference>
<dbReference type="NCBIfam" id="NF012164">
    <property type="entry name" value="AlbA"/>
    <property type="match status" value="1"/>
</dbReference>
<dbReference type="NCBIfam" id="TIGR04085">
    <property type="entry name" value="rSAM_more_4Fe4S"/>
    <property type="match status" value="1"/>
</dbReference>
<dbReference type="PANTHER" id="PTHR11228:SF7">
    <property type="entry name" value="PQQA PEPTIDE CYCLASE"/>
    <property type="match status" value="1"/>
</dbReference>
<dbReference type="PANTHER" id="PTHR11228">
    <property type="entry name" value="RADICAL SAM DOMAIN PROTEIN"/>
    <property type="match status" value="1"/>
</dbReference>
<dbReference type="Pfam" id="PF05402">
    <property type="entry name" value="PqqD"/>
    <property type="match status" value="1"/>
</dbReference>
<dbReference type="Pfam" id="PF04055">
    <property type="entry name" value="Radical_SAM"/>
    <property type="match status" value="1"/>
</dbReference>
<dbReference type="Pfam" id="PF13186">
    <property type="entry name" value="SPASM"/>
    <property type="match status" value="1"/>
</dbReference>
<dbReference type="SFLD" id="SFLDF00315">
    <property type="entry name" value="antilisterial_bacteriocin_subt"/>
    <property type="match status" value="1"/>
</dbReference>
<dbReference type="SFLD" id="SFLDS00029">
    <property type="entry name" value="Radical_SAM"/>
    <property type="match status" value="1"/>
</dbReference>
<dbReference type="SMART" id="SM00729">
    <property type="entry name" value="Elp3"/>
    <property type="match status" value="1"/>
</dbReference>
<dbReference type="SUPFAM" id="SSF102114">
    <property type="entry name" value="Radical SAM enzymes"/>
    <property type="match status" value="1"/>
</dbReference>
<dbReference type="PROSITE" id="PS51918">
    <property type="entry name" value="RADICAL_SAM"/>
    <property type="match status" value="1"/>
</dbReference>